<name>APDB_EMENI</name>
<organism>
    <name type="scientific">Emericella nidulans (strain FGSC A4 / ATCC 38163 / CBS 112.46 / NRRL 194 / M139)</name>
    <name type="common">Aspergillus nidulans</name>
    <dbReference type="NCBI Taxonomy" id="227321"/>
    <lineage>
        <taxon>Eukaryota</taxon>
        <taxon>Fungi</taxon>
        <taxon>Dikarya</taxon>
        <taxon>Ascomycota</taxon>
        <taxon>Pezizomycotina</taxon>
        <taxon>Eurotiomycetes</taxon>
        <taxon>Eurotiomycetidae</taxon>
        <taxon>Eurotiales</taxon>
        <taxon>Aspergillaceae</taxon>
        <taxon>Aspergillus</taxon>
        <taxon>Aspergillus subgen. Nidulantes</taxon>
    </lineage>
</organism>
<evidence type="ECO:0000250" key="1">
    <source>
        <dbReference type="UniProtKB" id="P04798"/>
    </source>
</evidence>
<evidence type="ECO:0000255" key="2"/>
<evidence type="ECO:0000269" key="3">
    <source>
    </source>
</evidence>
<evidence type="ECO:0000269" key="4">
    <source>
    </source>
</evidence>
<evidence type="ECO:0000269" key="5">
    <source>
    </source>
</evidence>
<evidence type="ECO:0000269" key="6">
    <source ref="5"/>
</evidence>
<evidence type="ECO:0000303" key="7">
    <source>
    </source>
</evidence>
<evidence type="ECO:0000305" key="8"/>
<evidence type="ECO:0000305" key="9">
    <source ref="5"/>
</evidence>
<keyword id="KW-0408">Iron</keyword>
<keyword id="KW-0472">Membrane</keyword>
<keyword id="KW-0479">Metal-binding</keyword>
<keyword id="KW-0503">Monooxygenase</keyword>
<keyword id="KW-0560">Oxidoreductase</keyword>
<keyword id="KW-1185">Reference proteome</keyword>
<keyword id="KW-0812">Transmembrane</keyword>
<keyword id="KW-1133">Transmembrane helix</keyword>
<reference key="1">
    <citation type="journal article" date="2005" name="Nature">
        <title>Sequencing of Aspergillus nidulans and comparative analysis with A. fumigatus and A. oryzae.</title>
        <authorList>
            <person name="Galagan J.E."/>
            <person name="Calvo S.E."/>
            <person name="Cuomo C."/>
            <person name="Ma L.-J."/>
            <person name="Wortman J.R."/>
            <person name="Batzoglou S."/>
            <person name="Lee S.-I."/>
            <person name="Bastuerkmen M."/>
            <person name="Spevak C.C."/>
            <person name="Clutterbuck J."/>
            <person name="Kapitonov V."/>
            <person name="Jurka J."/>
            <person name="Scazzocchio C."/>
            <person name="Farman M.L."/>
            <person name="Butler J."/>
            <person name="Purcell S."/>
            <person name="Harris S."/>
            <person name="Braus G.H."/>
            <person name="Draht O."/>
            <person name="Busch S."/>
            <person name="D'Enfert C."/>
            <person name="Bouchier C."/>
            <person name="Goldman G.H."/>
            <person name="Bell-Pedersen D."/>
            <person name="Griffiths-Jones S."/>
            <person name="Doonan J.H."/>
            <person name="Yu J."/>
            <person name="Vienken K."/>
            <person name="Pain A."/>
            <person name="Freitag M."/>
            <person name="Selker E.U."/>
            <person name="Archer D.B."/>
            <person name="Penalva M.A."/>
            <person name="Oakley B.R."/>
            <person name="Momany M."/>
            <person name="Tanaka T."/>
            <person name="Kumagai T."/>
            <person name="Asai K."/>
            <person name="Machida M."/>
            <person name="Nierman W.C."/>
            <person name="Denning D.W."/>
            <person name="Caddick M.X."/>
            <person name="Hynes M."/>
            <person name="Paoletti M."/>
            <person name="Fischer R."/>
            <person name="Miller B.L."/>
            <person name="Dyer P.S."/>
            <person name="Sachs M.S."/>
            <person name="Osmani S.A."/>
            <person name="Birren B.W."/>
        </authorList>
    </citation>
    <scope>NUCLEOTIDE SEQUENCE [LARGE SCALE GENOMIC DNA]</scope>
    <source>
        <strain>FGSC A4 / ATCC 38163 / CBS 112.46 / NRRL 194 / M139</strain>
    </source>
</reference>
<reference key="2">
    <citation type="journal article" date="2009" name="Fungal Genet. Biol.">
        <title>The 2008 update of the Aspergillus nidulans genome annotation: a community effort.</title>
        <authorList>
            <person name="Wortman J.R."/>
            <person name="Gilsenan J.M."/>
            <person name="Joardar V."/>
            <person name="Deegan J."/>
            <person name="Clutterbuck J."/>
            <person name="Andersen M.R."/>
            <person name="Archer D."/>
            <person name="Bencina M."/>
            <person name="Braus G."/>
            <person name="Coutinho P."/>
            <person name="von Dohren H."/>
            <person name="Doonan J."/>
            <person name="Driessen A.J."/>
            <person name="Durek P."/>
            <person name="Espeso E."/>
            <person name="Fekete E."/>
            <person name="Flipphi M."/>
            <person name="Estrada C.G."/>
            <person name="Geysens S."/>
            <person name="Goldman G."/>
            <person name="de Groot P.W."/>
            <person name="Hansen K."/>
            <person name="Harris S.D."/>
            <person name="Heinekamp T."/>
            <person name="Helmstaedt K."/>
            <person name="Henrissat B."/>
            <person name="Hofmann G."/>
            <person name="Homan T."/>
            <person name="Horio T."/>
            <person name="Horiuchi H."/>
            <person name="James S."/>
            <person name="Jones M."/>
            <person name="Karaffa L."/>
            <person name="Karanyi Z."/>
            <person name="Kato M."/>
            <person name="Keller N."/>
            <person name="Kelly D.E."/>
            <person name="Kiel J.A."/>
            <person name="Kim J.M."/>
            <person name="van der Klei I.J."/>
            <person name="Klis F.M."/>
            <person name="Kovalchuk A."/>
            <person name="Krasevec N."/>
            <person name="Kubicek C.P."/>
            <person name="Liu B."/>
            <person name="Maccabe A."/>
            <person name="Meyer V."/>
            <person name="Mirabito P."/>
            <person name="Miskei M."/>
            <person name="Mos M."/>
            <person name="Mullins J."/>
            <person name="Nelson D.R."/>
            <person name="Nielsen J."/>
            <person name="Oakley B.R."/>
            <person name="Osmani S.A."/>
            <person name="Pakula T."/>
            <person name="Paszewski A."/>
            <person name="Paulsen I."/>
            <person name="Pilsyk S."/>
            <person name="Pocsi I."/>
            <person name="Punt P.J."/>
            <person name="Ram A.F."/>
            <person name="Ren Q."/>
            <person name="Robellet X."/>
            <person name="Robson G."/>
            <person name="Seiboth B."/>
            <person name="van Solingen P."/>
            <person name="Specht T."/>
            <person name="Sun J."/>
            <person name="Taheri-Talesh N."/>
            <person name="Takeshita N."/>
            <person name="Ussery D."/>
            <person name="vanKuyk P.A."/>
            <person name="Visser H."/>
            <person name="van de Vondervoort P.J."/>
            <person name="de Vries R.P."/>
            <person name="Walton J."/>
            <person name="Xiang X."/>
            <person name="Xiong Y."/>
            <person name="Zeng A.P."/>
            <person name="Brandt B.W."/>
            <person name="Cornell M.J."/>
            <person name="van den Hondel C.A."/>
            <person name="Visser J."/>
            <person name="Oliver S.G."/>
            <person name="Turner G."/>
        </authorList>
    </citation>
    <scope>GENOME REANNOTATION</scope>
    <source>
        <strain>FGSC A4 / ATCC 38163 / CBS 112.46 / NRRL 194 / M139</strain>
    </source>
</reference>
<reference key="3">
    <citation type="journal article" date="2007" name="Nat. Chem. Biol.">
        <title>Genomics-driven discovery of PKS-NRPS hybrid metabolites from Aspergillus nidulans.</title>
        <authorList>
            <person name="Bergmann S."/>
            <person name="Schuemann J."/>
            <person name="Scherlach K."/>
            <person name="Lange C."/>
            <person name="Brakhage A.A."/>
            <person name="Hertweck C."/>
        </authorList>
    </citation>
    <scope>FUNCTION</scope>
    <scope>INDUCTION</scope>
    <scope>PATHWAY</scope>
</reference>
<reference key="4">
    <citation type="journal article" date="2010" name="J. Am. Chem. Soc.">
        <title>Analysis of intact and dissected fungal polyketide synthase-nonribosomal peptide synthetase in vitro and in Saccharomyces cerevisiae.</title>
        <authorList>
            <person name="Xu W."/>
            <person name="Cai X."/>
            <person name="Jung M.E."/>
            <person name="Tang Y."/>
        </authorList>
    </citation>
    <scope>FUNCTION</scope>
</reference>
<reference key="5">
    <citation type="journal article" date="2013" name="Chem. Sci.">
        <title>One pathway, many compounds: Heterologous expression of a fungal biosynthetic pathway reveals its intrinsic potential for diversity.</title>
        <authorList>
            <person name="Wasil Z."/>
            <person name="Pahirulzaman K.A.K."/>
            <person name="Butts C."/>
            <person name="Simpson T.J."/>
            <person name="Lazarus C.M."/>
            <person name="Cox R.J."/>
        </authorList>
    </citation>
    <scope>FUNCTION</scope>
    <scope>CATALYTIC ACTIVITY</scope>
    <scope>PATHWAY</scope>
</reference>
<reference key="6">
    <citation type="journal article" date="2014" name="Org. Lett.">
        <title>Methylation-dependent acyl transfer between polyketide synthase and nonribosomal peptide synthetase modules in fungal natural product biosynthesis.</title>
        <authorList>
            <person name="Zou Y."/>
            <person name="Xu W."/>
            <person name="Tsunematsu Y."/>
            <person name="Tang M."/>
            <person name="Watanabe K."/>
            <person name="Tang Y."/>
        </authorList>
    </citation>
    <scope>FUNCTION</scope>
</reference>
<proteinExistence type="evidence at protein level"/>
<feature type="chain" id="PRO_0000438447" description="Cytochrome P450 monooxygenase apdB">
    <location>
        <begin position="1"/>
        <end position="498"/>
    </location>
</feature>
<feature type="transmembrane region" description="Helical" evidence="2">
    <location>
        <begin position="20"/>
        <end position="40"/>
    </location>
</feature>
<feature type="binding site" description="axial binding residue" evidence="1">
    <location>
        <position position="457"/>
    </location>
    <ligand>
        <name>heme</name>
        <dbReference type="ChEBI" id="CHEBI:30413"/>
    </ligand>
    <ligandPart>
        <name>Fe</name>
        <dbReference type="ChEBI" id="CHEBI:18248"/>
    </ligandPart>
</feature>
<accession>Q5ATH2</accession>
<accession>C8VEA9</accession>
<comment type="function">
    <text evidence="3 4 5 6 9">Cytochrome P450 monooxygenase; part of the gene cluster that mediates the biosynthesis of aspyridones (PubMed:17369821, Ref.5). The polyketide-amino acid backbone preaspyridone A is first assembled by the PKS-NRPS hybrid apdA (PubMed:17369821, PubMed:20828130). The assembly of preaspyridone A is initiated by loading of malonyl-CoA onto apdA, followed by decarboxylation to yield the acetyl starter unit (PubMed:20828130). The growing polyketide chain then elongates into a tetraketide (PubMed:20828130). The adpA PKS module catalyzes three Claisen condensations, as well as beta-keto processing and methylation (PubMed:17369821, PubMed:20828130). Alpha-methylation step during polyketide synthesis is a prerequisite and a key checkpoint for chain transfer between PKS and NRPS modules (PubMed:25494235). The downstream NRPS module contains the condensation (C), adenylation (A), and thiolation (T) domains and catalyzes the incorporation of tyrosine via the formation of the L-tyrosinyl-thioester and the amide linkage between L-tyrosinyl-thioester and the tetraketide (PubMed:20828130). The bimodular assembly line is terminated with a reductase (R) domain that facilitates formation and release of the tetramic acid product (PubMed:20828130). Because apdA lacks a designated enoylreductase (ER) domain, the required activity is provided the enoyl reductase apdC (PubMed:17369821, PubMed:20828130, Ref.5). ApdC appears to operate with different stereoselectivity in different PKS cycle (Ref.5). Combined with apdC, apdA is proposed to synthesize preaspyridone A via about 20 enzymatic steps (PubMed:20828130). A number of oxidative steps performed successively by the cytochrome P450 monooxygenases apdE and apdB are required for the conversion of preaspyridone A to aspyridone A (PubMed:17369821). The cytochrome P450 monooxygenase apdE is responsible for the oxidative dephenylation of preaspyridone A (Ref.5). Finally, the predicted FAD-dependent monooxygenase apdD and the acyl-CoA dehydrogenase apdG may be involved in the transformation of aspyridone A into aspyridone B (Probable) (PubMed:17369821).</text>
</comment>
<comment type="cofactor">
    <cofactor evidence="1">
        <name>heme</name>
        <dbReference type="ChEBI" id="CHEBI:30413"/>
    </cofactor>
</comment>
<comment type="pathway">
    <text evidence="3 6">Secondary metabolite biosynthesis.</text>
</comment>
<comment type="subcellular location">
    <subcellularLocation>
        <location evidence="2">Membrane</location>
        <topology evidence="2">Single-pass membrane protein</topology>
    </subcellularLocation>
</comment>
<comment type="induction">
    <text evidence="3">Expression is positively regulated by the aspyridones cluster specific transcription regulator apdR (PubMed:17369821).</text>
</comment>
<comment type="similarity">
    <text evidence="8">Belongs to the cytochrome P450 family.</text>
</comment>
<sequence>MGFVNTLTQASDQENQRLRASPQVFKLFVLILFVLLVLKIRRHRANRITNQYGRQICELHGDARVAKFAFSKQLSDQGKALAGDEPFIIRNGRARELVVTKPEHIYDFYKGDTKPCSLLGHAVGALAGERWSMIRRYFDPAFSFQSARQAIPELSASIDRWLDDLPLQGTGTGKGFALEIKKPCRFLPLRLAAEFVYGEIFDDKLFSALLDLNVLHEVILHDVIANKRLATRLGCWFDRAAAKRMEEFRSRWMEFNLGIIQSARGASKACPAERIYHGVEKGDLKLEEFLHTLDEILFANVDVSSAVLGTLFEHLAVNTAFQQKLRAEIETHIQTRTHTPDTDSDIDINTETGKYLSKQDTLMNFAVMEAMRLSPAFDCDFAAFSLPECTAVPKEIGGYRVPARCPVVIDAKRLNADRATWGKDGDTYRPERFRDIPPSKSRYGFMRFGVGAASGRCLGKHLADTLFKLTLIAVIERYSLHSVHDGPEVELREVVVRV</sequence>
<protein>
    <recommendedName>
        <fullName evidence="7">Cytochrome P450 monooxygenase apdB</fullName>
        <ecNumber evidence="6">1.-.-.-</ecNumber>
    </recommendedName>
    <alternativeName>
        <fullName evidence="7">Aspyridones biosynthesis protein B</fullName>
    </alternativeName>
</protein>
<dbReference type="EC" id="1.-.-.-" evidence="6"/>
<dbReference type="EMBL" id="BN001305">
    <property type="protein sequence ID" value="CBF80479.1"/>
    <property type="molecule type" value="Genomic_DNA"/>
</dbReference>
<dbReference type="EMBL" id="AACD01000153">
    <property type="protein sequence ID" value="EAA67030.1"/>
    <property type="molecule type" value="Genomic_DNA"/>
</dbReference>
<dbReference type="RefSeq" id="XP_681677.1">
    <property type="nucleotide sequence ID" value="XM_676585.1"/>
</dbReference>
<dbReference type="SMR" id="Q5ATH2"/>
<dbReference type="STRING" id="227321.Q5ATH2"/>
<dbReference type="EnsemblFungi" id="CBF80479">
    <property type="protein sequence ID" value="CBF80479"/>
    <property type="gene ID" value="ANIA_08408"/>
</dbReference>
<dbReference type="KEGG" id="ani:ANIA_08408"/>
<dbReference type="VEuPathDB" id="FungiDB:AN8408"/>
<dbReference type="eggNOG" id="KOG0157">
    <property type="taxonomic scope" value="Eukaryota"/>
</dbReference>
<dbReference type="HOGENOM" id="CLU_042557_0_0_1"/>
<dbReference type="InParanoid" id="Q5ATH2"/>
<dbReference type="OMA" id="REMILNW"/>
<dbReference type="OrthoDB" id="2789670at2759"/>
<dbReference type="Proteomes" id="UP000000560">
    <property type="component" value="Chromosome V"/>
</dbReference>
<dbReference type="GO" id="GO:0016020">
    <property type="term" value="C:membrane"/>
    <property type="evidence" value="ECO:0007669"/>
    <property type="project" value="UniProtKB-SubCell"/>
</dbReference>
<dbReference type="GO" id="GO:0020037">
    <property type="term" value="F:heme binding"/>
    <property type="evidence" value="ECO:0007669"/>
    <property type="project" value="InterPro"/>
</dbReference>
<dbReference type="GO" id="GO:0005506">
    <property type="term" value="F:iron ion binding"/>
    <property type="evidence" value="ECO:0007669"/>
    <property type="project" value="InterPro"/>
</dbReference>
<dbReference type="GO" id="GO:0004497">
    <property type="term" value="F:monooxygenase activity"/>
    <property type="evidence" value="ECO:0007669"/>
    <property type="project" value="UniProtKB-KW"/>
</dbReference>
<dbReference type="GO" id="GO:0016705">
    <property type="term" value="F:oxidoreductase activity, acting on paired donors, with incorporation or reduction of molecular oxygen"/>
    <property type="evidence" value="ECO:0007669"/>
    <property type="project" value="InterPro"/>
</dbReference>
<dbReference type="GO" id="GO:0044550">
    <property type="term" value="P:secondary metabolite biosynthetic process"/>
    <property type="evidence" value="ECO:0007669"/>
    <property type="project" value="UniProtKB-ARBA"/>
</dbReference>
<dbReference type="CDD" id="cd20615">
    <property type="entry name" value="CYP_GliC-like"/>
    <property type="match status" value="1"/>
</dbReference>
<dbReference type="Gene3D" id="1.10.630.10">
    <property type="entry name" value="Cytochrome P450"/>
    <property type="match status" value="1"/>
</dbReference>
<dbReference type="InterPro" id="IPR001128">
    <property type="entry name" value="Cyt_P450"/>
</dbReference>
<dbReference type="InterPro" id="IPR036396">
    <property type="entry name" value="Cyt_P450_sf"/>
</dbReference>
<dbReference type="InterPro" id="IPR050121">
    <property type="entry name" value="Cytochrome_P450_monoxygenase"/>
</dbReference>
<dbReference type="PANTHER" id="PTHR24305">
    <property type="entry name" value="CYTOCHROME P450"/>
    <property type="match status" value="1"/>
</dbReference>
<dbReference type="PANTHER" id="PTHR24305:SF235">
    <property type="entry name" value="CYTOCHROME P450 MONOOXYGENASE APDB-RELATED"/>
    <property type="match status" value="1"/>
</dbReference>
<dbReference type="Pfam" id="PF00067">
    <property type="entry name" value="p450"/>
    <property type="match status" value="1"/>
</dbReference>
<dbReference type="SUPFAM" id="SSF48264">
    <property type="entry name" value="Cytochrome P450"/>
    <property type="match status" value="1"/>
</dbReference>
<gene>
    <name evidence="7" type="primary">apdB</name>
    <name type="ORF">AN8408</name>
</gene>